<organism>
    <name type="scientific">Homo sapiens</name>
    <name type="common">Human</name>
    <dbReference type="NCBI Taxonomy" id="9606"/>
    <lineage>
        <taxon>Eukaryota</taxon>
        <taxon>Metazoa</taxon>
        <taxon>Chordata</taxon>
        <taxon>Craniata</taxon>
        <taxon>Vertebrata</taxon>
        <taxon>Euteleostomi</taxon>
        <taxon>Mammalia</taxon>
        <taxon>Eutheria</taxon>
        <taxon>Euarchontoglires</taxon>
        <taxon>Primates</taxon>
        <taxon>Haplorrhini</taxon>
        <taxon>Catarrhini</taxon>
        <taxon>Hominidae</taxon>
        <taxon>Homo</taxon>
    </lineage>
</organism>
<protein>
    <recommendedName>
        <fullName>Insulin growth factor-like family member 2</fullName>
    </recommendedName>
</protein>
<name>IGFL2_HUMAN</name>
<evidence type="ECO:0000255" key="1"/>
<evidence type="ECO:0000269" key="2">
    <source>
    </source>
</evidence>
<evidence type="ECO:0000269" key="3">
    <source>
    </source>
</evidence>
<evidence type="ECO:0000303" key="4">
    <source>
    </source>
</evidence>
<evidence type="ECO:0000305" key="5"/>
<gene>
    <name type="primary">IGFL2</name>
    <name type="ORF">UNQ645/PRO1275</name>
</gene>
<sequence>MVPRIFAPAYVSVCLLLLCPREVIAPAGSEPWLCQPAPRCGDKIYNPLEQCCYNDAIVSLSETRQCGPPCTFWPCFELCCLDSFGLTNDFVVKLKVQGVNSQCHSSPISSKCESRRRFP</sequence>
<feature type="signal peptide" evidence="1">
    <location>
        <begin position="1"/>
        <end position="25"/>
    </location>
</feature>
<feature type="chain" id="PRO_0000045061" description="Insulin growth factor-like family member 2">
    <location>
        <begin position="26"/>
        <end position="119"/>
    </location>
</feature>
<feature type="splice variant" id="VSP_016606" description="In isoform 2." evidence="4">
    <original>MVPRIF</original>
    <variation>MRFSVSGMRTDYPRSVL</variation>
    <location>
        <begin position="1"/>
        <end position="6"/>
    </location>
</feature>
<keyword id="KW-0025">Alternative splicing</keyword>
<keyword id="KW-1267">Proteomics identification</keyword>
<keyword id="KW-1185">Reference proteome</keyword>
<keyword id="KW-0964">Secreted</keyword>
<keyword id="KW-0732">Signal</keyword>
<reference key="1">
    <citation type="journal article" date="2006" name="Genomics">
        <title>IGFL: a secreted family with conserved cysteine residues and similarities to the IGF superfamily.</title>
        <authorList>
            <person name="Emtage P."/>
            <person name="Vatta P."/>
            <person name="Arterburn M."/>
            <person name="Muller M.W."/>
            <person name="Park E."/>
            <person name="Boyle B."/>
            <person name="Hazell S."/>
            <person name="Polizotto R."/>
            <person name="Funk W.D."/>
            <person name="Tang Y.T."/>
        </authorList>
    </citation>
    <scope>NUCLEOTIDE SEQUENCE [MRNA] (ISOFORM 2)</scope>
    <scope>TISSUE SPECIFICITY</scope>
</reference>
<reference key="2">
    <citation type="journal article" date="2003" name="Genome Res.">
        <title>The secreted protein discovery initiative (SPDI), a large-scale effort to identify novel human secreted and transmembrane proteins: a bioinformatics assessment.</title>
        <authorList>
            <person name="Clark H.F."/>
            <person name="Gurney A.L."/>
            <person name="Abaya E."/>
            <person name="Baker K."/>
            <person name="Baldwin D.T."/>
            <person name="Brush J."/>
            <person name="Chen J."/>
            <person name="Chow B."/>
            <person name="Chui C."/>
            <person name="Crowley C."/>
            <person name="Currell B."/>
            <person name="Deuel B."/>
            <person name="Dowd P."/>
            <person name="Eaton D."/>
            <person name="Foster J.S."/>
            <person name="Grimaldi C."/>
            <person name="Gu Q."/>
            <person name="Hass P.E."/>
            <person name="Heldens S."/>
            <person name="Huang A."/>
            <person name="Kim H.S."/>
            <person name="Klimowski L."/>
            <person name="Jin Y."/>
            <person name="Johnson S."/>
            <person name="Lee J."/>
            <person name="Lewis L."/>
            <person name="Liao D."/>
            <person name="Mark M.R."/>
            <person name="Robbie E."/>
            <person name="Sanchez C."/>
            <person name="Schoenfeld J."/>
            <person name="Seshagiri S."/>
            <person name="Simmons L."/>
            <person name="Singh J."/>
            <person name="Smith V."/>
            <person name="Stinson J."/>
            <person name="Vagts A."/>
            <person name="Vandlen R.L."/>
            <person name="Watanabe C."/>
            <person name="Wieand D."/>
            <person name="Woods K."/>
            <person name="Xie M.-H."/>
            <person name="Yansura D.G."/>
            <person name="Yi S."/>
            <person name="Yu G."/>
            <person name="Yuan J."/>
            <person name="Zhang M."/>
            <person name="Zhang Z."/>
            <person name="Goddard A.D."/>
            <person name="Wood W.I."/>
            <person name="Godowski P.J."/>
            <person name="Gray A.M."/>
        </authorList>
    </citation>
    <scope>NUCLEOTIDE SEQUENCE [LARGE SCALE MRNA] (ISOFORM 1)</scope>
</reference>
<reference key="3">
    <citation type="journal article" date="2004" name="Nature">
        <title>The DNA sequence and biology of human chromosome 19.</title>
        <authorList>
            <person name="Grimwood J."/>
            <person name="Gordon L.A."/>
            <person name="Olsen A.S."/>
            <person name="Terry A."/>
            <person name="Schmutz J."/>
            <person name="Lamerdin J.E."/>
            <person name="Hellsten U."/>
            <person name="Goodstein D."/>
            <person name="Couronne O."/>
            <person name="Tran-Gyamfi M."/>
            <person name="Aerts A."/>
            <person name="Altherr M."/>
            <person name="Ashworth L."/>
            <person name="Bajorek E."/>
            <person name="Black S."/>
            <person name="Branscomb E."/>
            <person name="Caenepeel S."/>
            <person name="Carrano A.V."/>
            <person name="Caoile C."/>
            <person name="Chan Y.M."/>
            <person name="Christensen M."/>
            <person name="Cleland C.A."/>
            <person name="Copeland A."/>
            <person name="Dalin E."/>
            <person name="Dehal P."/>
            <person name="Denys M."/>
            <person name="Detter J.C."/>
            <person name="Escobar J."/>
            <person name="Flowers D."/>
            <person name="Fotopulos D."/>
            <person name="Garcia C."/>
            <person name="Georgescu A.M."/>
            <person name="Glavina T."/>
            <person name="Gomez M."/>
            <person name="Gonzales E."/>
            <person name="Groza M."/>
            <person name="Hammon N."/>
            <person name="Hawkins T."/>
            <person name="Haydu L."/>
            <person name="Ho I."/>
            <person name="Huang W."/>
            <person name="Israni S."/>
            <person name="Jett J."/>
            <person name="Kadner K."/>
            <person name="Kimball H."/>
            <person name="Kobayashi A."/>
            <person name="Larionov V."/>
            <person name="Leem S.-H."/>
            <person name="Lopez F."/>
            <person name="Lou Y."/>
            <person name="Lowry S."/>
            <person name="Malfatti S."/>
            <person name="Martinez D."/>
            <person name="McCready P.M."/>
            <person name="Medina C."/>
            <person name="Morgan J."/>
            <person name="Nelson K."/>
            <person name="Nolan M."/>
            <person name="Ovcharenko I."/>
            <person name="Pitluck S."/>
            <person name="Pollard M."/>
            <person name="Popkie A.P."/>
            <person name="Predki P."/>
            <person name="Quan G."/>
            <person name="Ramirez L."/>
            <person name="Rash S."/>
            <person name="Retterer J."/>
            <person name="Rodriguez A."/>
            <person name="Rogers S."/>
            <person name="Salamov A."/>
            <person name="Salazar A."/>
            <person name="She X."/>
            <person name="Smith D."/>
            <person name="Slezak T."/>
            <person name="Solovyev V."/>
            <person name="Thayer N."/>
            <person name="Tice H."/>
            <person name="Tsai M."/>
            <person name="Ustaszewska A."/>
            <person name="Vo N."/>
            <person name="Wagner M."/>
            <person name="Wheeler J."/>
            <person name="Wu K."/>
            <person name="Xie G."/>
            <person name="Yang J."/>
            <person name="Dubchak I."/>
            <person name="Furey T.S."/>
            <person name="DeJong P."/>
            <person name="Dickson M."/>
            <person name="Gordon D."/>
            <person name="Eichler E.E."/>
            <person name="Pennacchio L.A."/>
            <person name="Richardson P."/>
            <person name="Stubbs L."/>
            <person name="Rokhsar D.S."/>
            <person name="Myers R.M."/>
            <person name="Rubin E.M."/>
            <person name="Lucas S.M."/>
        </authorList>
    </citation>
    <scope>NUCLEOTIDE SEQUENCE [LARGE SCALE GENOMIC DNA]</scope>
</reference>
<reference key="4">
    <citation type="journal article" date="2011" name="J. Biol. Chem.">
        <title>Murine IGFL and human IGFL1 are induced in inflammatory skin conditions and bind to a novel TNF receptor family member, IGFLR1.</title>
        <authorList>
            <person name="Lobito A.A."/>
            <person name="Ramani S.R."/>
            <person name="Tom I."/>
            <person name="Bazan J.F."/>
            <person name="Luis E."/>
            <person name="Fairbrother W.J."/>
            <person name="Ouyang W."/>
            <person name="Gonzalez L.C."/>
        </authorList>
    </citation>
    <scope>FUNCTION</scope>
</reference>
<accession>Q6UWQ7</accession>
<accession>E9PAV1</accession>
<accession>Q6B9Z3</accession>
<dbReference type="EMBL" id="AY672112">
    <property type="protein sequence ID" value="AAT77786.1"/>
    <property type="status" value="ALT_INIT"/>
    <property type="molecule type" value="mRNA"/>
</dbReference>
<dbReference type="EMBL" id="AY358692">
    <property type="protein sequence ID" value="AAQ89055.1"/>
    <property type="molecule type" value="mRNA"/>
</dbReference>
<dbReference type="EMBL" id="AC007785">
    <property type="status" value="NOT_ANNOTATED_CDS"/>
    <property type="molecule type" value="Genomic_DNA"/>
</dbReference>
<dbReference type="CCDS" id="CCDS46121.1">
    <molecule id="Q6UWQ7-1"/>
</dbReference>
<dbReference type="CCDS" id="CCDS46122.1">
    <molecule id="Q6UWQ7-2"/>
</dbReference>
<dbReference type="RefSeq" id="NP_001002915.2">
    <molecule id="Q6UWQ7-2"/>
    <property type="nucleotide sequence ID" value="NM_001002915.3"/>
</dbReference>
<dbReference type="RefSeq" id="NP_001128585.1">
    <molecule id="Q6UWQ7-1"/>
    <property type="nucleotide sequence ID" value="NM_001135113.2"/>
</dbReference>
<dbReference type="RefSeq" id="XP_011524803.1">
    <property type="nucleotide sequence ID" value="XM_011526501.1"/>
</dbReference>
<dbReference type="RefSeq" id="XP_016881824.1">
    <property type="nucleotide sequence ID" value="XM_017026335.1"/>
</dbReference>
<dbReference type="RefSeq" id="XP_024307149.1">
    <molecule id="Q6UWQ7-2"/>
    <property type="nucleotide sequence ID" value="XM_024451381.2"/>
</dbReference>
<dbReference type="RefSeq" id="XP_047294184.1">
    <molecule id="Q6UWQ7-2"/>
    <property type="nucleotide sequence ID" value="XM_047438228.1"/>
</dbReference>
<dbReference type="RefSeq" id="XP_054175874.1">
    <molecule id="Q6UWQ7-2"/>
    <property type="nucleotide sequence ID" value="XM_054319899.1"/>
</dbReference>
<dbReference type="RefSeq" id="XP_054175875.1">
    <molecule id="Q6UWQ7-2"/>
    <property type="nucleotide sequence ID" value="XM_054319900.1"/>
</dbReference>
<dbReference type="RefSeq" id="XP_054175876.1">
    <molecule id="Q6UWQ7-2"/>
    <property type="nucleotide sequence ID" value="XM_054319901.1"/>
</dbReference>
<dbReference type="RefSeq" id="XP_054175877.1">
    <molecule id="Q6UWQ7-2"/>
    <property type="nucleotide sequence ID" value="XM_054319902.1"/>
</dbReference>
<dbReference type="RefSeq" id="XP_054175879.1">
    <molecule id="Q6UWQ7-2"/>
    <property type="nucleotide sequence ID" value="XM_054319904.1"/>
</dbReference>
<dbReference type="RefSeq" id="XP_054175880.1">
    <molecule id="Q6UWQ7-2"/>
    <property type="nucleotide sequence ID" value="XM_054319905.1"/>
</dbReference>
<dbReference type="BioGRID" id="127097">
    <property type="interactions" value="3"/>
</dbReference>
<dbReference type="FunCoup" id="Q6UWQ7">
    <property type="interactions" value="13"/>
</dbReference>
<dbReference type="IntAct" id="Q6UWQ7">
    <property type="interactions" value="4"/>
</dbReference>
<dbReference type="STRING" id="9606.ENSP00000395219"/>
<dbReference type="BioMuta" id="IGFL2"/>
<dbReference type="jPOST" id="Q6UWQ7"/>
<dbReference type="MassIVE" id="Q6UWQ7"/>
<dbReference type="PaxDb" id="9606-ENSP00000395219"/>
<dbReference type="PeptideAtlas" id="Q6UWQ7"/>
<dbReference type="TopDownProteomics" id="Q6UWQ7-1">
    <molecule id="Q6UWQ7-1"/>
</dbReference>
<dbReference type="Antibodypedia" id="62142">
    <property type="antibodies" value="48 antibodies from 16 providers"/>
</dbReference>
<dbReference type="DNASU" id="147920"/>
<dbReference type="Ensembl" id="ENST00000377693.5">
    <molecule id="Q6UWQ7-1"/>
    <property type="protein sequence ID" value="ENSP00000366922.3"/>
    <property type="gene ID" value="ENSG00000204866.9"/>
</dbReference>
<dbReference type="Ensembl" id="ENST00000434646.6">
    <molecule id="Q6UWQ7-2"/>
    <property type="protein sequence ID" value="ENSP00000395219.1"/>
    <property type="gene ID" value="ENSG00000204866.9"/>
</dbReference>
<dbReference type="GeneID" id="147920"/>
<dbReference type="KEGG" id="hsa:147920"/>
<dbReference type="MANE-Select" id="ENST00000377693.5">
    <property type="protein sequence ID" value="ENSP00000366922.3"/>
    <property type="RefSeq nucleotide sequence ID" value="NM_001135113.2"/>
    <property type="RefSeq protein sequence ID" value="NP_001128585.1"/>
</dbReference>
<dbReference type="UCSC" id="uc002peb.4">
    <molecule id="Q6UWQ7-1"/>
    <property type="organism name" value="human"/>
</dbReference>
<dbReference type="AGR" id="HGNC:32929"/>
<dbReference type="CTD" id="147920"/>
<dbReference type="DisGeNET" id="147920"/>
<dbReference type="GeneCards" id="IGFL2"/>
<dbReference type="HGNC" id="HGNC:32929">
    <property type="gene designation" value="IGFL2"/>
</dbReference>
<dbReference type="HPA" id="ENSG00000204866">
    <property type="expression patterns" value="Tissue enriched (skin)"/>
</dbReference>
<dbReference type="MIM" id="610545">
    <property type="type" value="gene"/>
</dbReference>
<dbReference type="neXtProt" id="NX_Q6UWQ7"/>
<dbReference type="OpenTargets" id="ENSG00000204866"/>
<dbReference type="PharmGKB" id="PA147357935"/>
<dbReference type="VEuPathDB" id="HostDB:ENSG00000204866"/>
<dbReference type="eggNOG" id="ENOG502TJ2N">
    <property type="taxonomic scope" value="Eukaryota"/>
</dbReference>
<dbReference type="GeneTree" id="ENSGT00390000009557"/>
<dbReference type="InParanoid" id="Q6UWQ7"/>
<dbReference type="OMA" id="MRTDYPR"/>
<dbReference type="OrthoDB" id="9834561at2759"/>
<dbReference type="PAN-GO" id="Q6UWQ7">
    <property type="GO annotations" value="2 GO annotations based on evolutionary models"/>
</dbReference>
<dbReference type="PhylomeDB" id="Q6UWQ7"/>
<dbReference type="TreeFam" id="TF343427"/>
<dbReference type="PathwayCommons" id="Q6UWQ7"/>
<dbReference type="SignaLink" id="Q6UWQ7"/>
<dbReference type="BioGRID-ORCS" id="147920">
    <property type="hits" value="15 hits in 1145 CRISPR screens"/>
</dbReference>
<dbReference type="ChiTaRS" id="IGFL2">
    <property type="organism name" value="human"/>
</dbReference>
<dbReference type="GenomeRNAi" id="147920"/>
<dbReference type="Pharos" id="Q6UWQ7">
    <property type="development level" value="Tdark"/>
</dbReference>
<dbReference type="PRO" id="PR:Q6UWQ7"/>
<dbReference type="Proteomes" id="UP000005640">
    <property type="component" value="Chromosome 19"/>
</dbReference>
<dbReference type="RNAct" id="Q6UWQ7">
    <property type="molecule type" value="protein"/>
</dbReference>
<dbReference type="Bgee" id="ENSG00000204866">
    <property type="expression patterns" value="Expressed in upper arm skin and 97 other cell types or tissues"/>
</dbReference>
<dbReference type="ExpressionAtlas" id="Q6UWQ7">
    <property type="expression patterns" value="baseline and differential"/>
</dbReference>
<dbReference type="GO" id="GO:0005615">
    <property type="term" value="C:extracellular space"/>
    <property type="evidence" value="ECO:0000314"/>
    <property type="project" value="UniProtKB"/>
</dbReference>
<dbReference type="GO" id="GO:0005102">
    <property type="term" value="F:signaling receptor binding"/>
    <property type="evidence" value="ECO:0000353"/>
    <property type="project" value="UniProtKB"/>
</dbReference>
<dbReference type="InterPro" id="IPR032744">
    <property type="entry name" value="IGFL"/>
</dbReference>
<dbReference type="PANTHER" id="PTHR34827:SF7">
    <property type="entry name" value="INSULIN GROWTH FACTOR-LIKE FAMILY MEMBER 2"/>
    <property type="match status" value="1"/>
</dbReference>
<dbReference type="PANTHER" id="PTHR34827">
    <property type="entry name" value="INSULIN GROWTH FACTOR-LIKE FAMILY MEMBER 3-RELATED"/>
    <property type="match status" value="1"/>
</dbReference>
<dbReference type="Pfam" id="PF14653">
    <property type="entry name" value="IGFL"/>
    <property type="match status" value="1"/>
</dbReference>
<proteinExistence type="evidence at protein level"/>
<comment type="function">
    <text evidence="3">Potential ligand of the IGFLR1 cell membrane receptor.</text>
</comment>
<comment type="interaction">
    <interactant intactId="EBI-18115692">
        <id>Q6UWQ7-2</id>
    </interactant>
    <interactant intactId="EBI-748265">
        <id>P78337</id>
        <label>PITX1</label>
    </interactant>
    <organismsDiffer>false</organismsDiffer>
    <experiments>3</experiments>
</comment>
<comment type="interaction">
    <interactant intactId="EBI-18115692">
        <id>Q6UWQ7-2</id>
    </interactant>
    <interactant intactId="EBI-12069346">
        <id>Q6IQ23-2</id>
        <label>PLEKHA7</label>
    </interactant>
    <organismsDiffer>false</organismsDiffer>
    <experiments>3</experiments>
</comment>
<comment type="interaction">
    <interactant intactId="EBI-18115692">
        <id>Q6UWQ7-2</id>
    </interactant>
    <interactant intactId="EBI-3939165">
        <id>O43711</id>
        <label>TLX3</label>
    </interactant>
    <organismsDiffer>false</organismsDiffer>
    <experiments>3</experiments>
</comment>
<comment type="subcellular location">
    <subcellularLocation>
        <location evidence="5">Secreted</location>
    </subcellularLocation>
</comment>
<comment type="alternative products">
    <event type="alternative splicing"/>
    <isoform>
        <id>Q6UWQ7-1</id>
        <name>1</name>
        <sequence type="displayed"/>
    </isoform>
    <isoform>
        <id>Q6UWQ7-2</id>
        <name>2</name>
        <sequence type="described" ref="VSP_016606"/>
    </isoform>
</comment>
<comment type="tissue specificity">
    <text evidence="2">Detected in cerebellum, heart, placenta, spleen, stomach, testis and thymus.</text>
</comment>
<comment type="similarity">
    <text evidence="5">Belongs to the IGFL family.</text>
</comment>
<comment type="sequence caution" evidence="5">
    <conflict type="erroneous initiation">
        <sequence resource="EMBL-CDS" id="AAT77786"/>
    </conflict>
    <text>Truncated N-terminus.</text>
</comment>